<accession>A6QGH0</accession>
<feature type="chain" id="PRO_1000084693" description="tRNA pseudouridine synthase B">
    <location>
        <begin position="1"/>
        <end position="305"/>
    </location>
</feature>
<feature type="active site" description="Nucleophile" evidence="1">
    <location>
        <position position="39"/>
    </location>
</feature>
<proteinExistence type="inferred from homology"/>
<organism>
    <name type="scientific">Staphylococcus aureus (strain Newman)</name>
    <dbReference type="NCBI Taxonomy" id="426430"/>
    <lineage>
        <taxon>Bacteria</taxon>
        <taxon>Bacillati</taxon>
        <taxon>Bacillota</taxon>
        <taxon>Bacilli</taxon>
        <taxon>Bacillales</taxon>
        <taxon>Staphylococcaceae</taxon>
        <taxon>Staphylococcus</taxon>
    </lineage>
</organism>
<name>TRUB_STAAE</name>
<reference key="1">
    <citation type="journal article" date="2008" name="J. Bacteriol.">
        <title>Genome sequence of Staphylococcus aureus strain Newman and comparative analysis of staphylococcal genomes: polymorphism and evolution of two major pathogenicity islands.</title>
        <authorList>
            <person name="Baba T."/>
            <person name="Bae T."/>
            <person name="Schneewind O."/>
            <person name="Takeuchi F."/>
            <person name="Hiramatsu K."/>
        </authorList>
    </citation>
    <scope>NUCLEOTIDE SEQUENCE [LARGE SCALE GENOMIC DNA]</scope>
    <source>
        <strain>Newman</strain>
    </source>
</reference>
<keyword id="KW-0413">Isomerase</keyword>
<keyword id="KW-0819">tRNA processing</keyword>
<dbReference type="EC" id="5.4.99.25" evidence="1"/>
<dbReference type="EMBL" id="AP009351">
    <property type="protein sequence ID" value="BAF67452.1"/>
    <property type="molecule type" value="Genomic_DNA"/>
</dbReference>
<dbReference type="RefSeq" id="WP_000282305.1">
    <property type="nucleotide sequence ID" value="NZ_JBBIAE010000001.1"/>
</dbReference>
<dbReference type="SMR" id="A6QGH0"/>
<dbReference type="KEGG" id="sae:NWMN_1180"/>
<dbReference type="HOGENOM" id="CLU_032087_0_1_9"/>
<dbReference type="Proteomes" id="UP000006386">
    <property type="component" value="Chromosome"/>
</dbReference>
<dbReference type="GO" id="GO:0003723">
    <property type="term" value="F:RNA binding"/>
    <property type="evidence" value="ECO:0007669"/>
    <property type="project" value="InterPro"/>
</dbReference>
<dbReference type="GO" id="GO:0160148">
    <property type="term" value="F:tRNA pseudouridine(55) synthase activity"/>
    <property type="evidence" value="ECO:0007669"/>
    <property type="project" value="UniProtKB-EC"/>
</dbReference>
<dbReference type="GO" id="GO:1990481">
    <property type="term" value="P:mRNA pseudouridine synthesis"/>
    <property type="evidence" value="ECO:0007669"/>
    <property type="project" value="TreeGrafter"/>
</dbReference>
<dbReference type="GO" id="GO:0031119">
    <property type="term" value="P:tRNA pseudouridine synthesis"/>
    <property type="evidence" value="ECO:0007669"/>
    <property type="project" value="UniProtKB-UniRule"/>
</dbReference>
<dbReference type="CDD" id="cd02573">
    <property type="entry name" value="PseudoU_synth_EcTruB"/>
    <property type="match status" value="1"/>
</dbReference>
<dbReference type="FunFam" id="3.30.2350.10:FF:000011">
    <property type="entry name" value="tRNA pseudouridine synthase B"/>
    <property type="match status" value="1"/>
</dbReference>
<dbReference type="Gene3D" id="3.30.2350.10">
    <property type="entry name" value="Pseudouridine synthase"/>
    <property type="match status" value="1"/>
</dbReference>
<dbReference type="HAMAP" id="MF_01080">
    <property type="entry name" value="TruB_bact"/>
    <property type="match status" value="1"/>
</dbReference>
<dbReference type="InterPro" id="IPR020103">
    <property type="entry name" value="PsdUridine_synth_cat_dom_sf"/>
</dbReference>
<dbReference type="InterPro" id="IPR002501">
    <property type="entry name" value="PsdUridine_synth_N"/>
</dbReference>
<dbReference type="InterPro" id="IPR014780">
    <property type="entry name" value="tRNA_psdUridine_synth_TruB"/>
</dbReference>
<dbReference type="InterPro" id="IPR032819">
    <property type="entry name" value="TruB_C"/>
</dbReference>
<dbReference type="NCBIfam" id="TIGR00431">
    <property type="entry name" value="TruB"/>
    <property type="match status" value="1"/>
</dbReference>
<dbReference type="PANTHER" id="PTHR13767:SF2">
    <property type="entry name" value="PSEUDOURIDYLATE SYNTHASE TRUB1"/>
    <property type="match status" value="1"/>
</dbReference>
<dbReference type="PANTHER" id="PTHR13767">
    <property type="entry name" value="TRNA-PSEUDOURIDINE SYNTHASE"/>
    <property type="match status" value="1"/>
</dbReference>
<dbReference type="Pfam" id="PF16198">
    <property type="entry name" value="TruB_C_2"/>
    <property type="match status" value="1"/>
</dbReference>
<dbReference type="Pfam" id="PF01509">
    <property type="entry name" value="TruB_N"/>
    <property type="match status" value="1"/>
</dbReference>
<dbReference type="SUPFAM" id="SSF55120">
    <property type="entry name" value="Pseudouridine synthase"/>
    <property type="match status" value="1"/>
</dbReference>
<gene>
    <name evidence="1" type="primary">truB</name>
    <name type="ordered locus">NWMN_1180</name>
</gene>
<protein>
    <recommendedName>
        <fullName evidence="1">tRNA pseudouridine synthase B</fullName>
        <ecNumber evidence="1">5.4.99.25</ecNumber>
    </recommendedName>
    <alternativeName>
        <fullName evidence="1">tRNA pseudouridine(55) synthase</fullName>
        <shortName evidence="1">Psi55 synthase</shortName>
    </alternativeName>
    <alternativeName>
        <fullName evidence="1">tRNA pseudouridylate synthase</fullName>
    </alternativeName>
    <alternativeName>
        <fullName evidence="1">tRNA-uridine isomerase</fullName>
    </alternativeName>
</protein>
<comment type="function">
    <text evidence="1">Responsible for synthesis of pseudouridine from uracil-55 in the psi GC loop of transfer RNAs.</text>
</comment>
<comment type="catalytic activity">
    <reaction evidence="1">
        <text>uridine(55) in tRNA = pseudouridine(55) in tRNA</text>
        <dbReference type="Rhea" id="RHEA:42532"/>
        <dbReference type="Rhea" id="RHEA-COMP:10101"/>
        <dbReference type="Rhea" id="RHEA-COMP:10102"/>
        <dbReference type="ChEBI" id="CHEBI:65314"/>
        <dbReference type="ChEBI" id="CHEBI:65315"/>
        <dbReference type="EC" id="5.4.99.25"/>
    </reaction>
</comment>
<comment type="similarity">
    <text evidence="1">Belongs to the pseudouridine synthase TruB family. Type 1 subfamily.</text>
</comment>
<sequence>MYNGILPVYKERGLTSHDVVFKLRKILKTKKIGHTGTLDPEVAGVLPVCIGNATRVSDYVMDMGKAYEATVSIGRSTTTEDQTGDTLETKGVHSADFNKDDIDRLLESFKGIIEQIPPMYSSVKVNGKKLYEYARNNETVERPKRKVNIKDIGRISELDFKENECHFKIRVICGKGTYIRTLATDIGVKLGFPAHMSKLTRIESGGFVLKDSLTLEQIKELHEQDSLQNKLFPLEYGLKGLPSIKIKDSHIKKRILNGQKFNKNEFDNKIKDQIVFIDDDSEKVLAIYMVHPTKESEIKPKKVFN</sequence>
<evidence type="ECO:0000255" key="1">
    <source>
        <dbReference type="HAMAP-Rule" id="MF_01080"/>
    </source>
</evidence>